<evidence type="ECO:0000255" key="1"/>
<evidence type="ECO:0000305" key="2"/>
<feature type="chain" id="PRO_0000150937" description="Cobalamin biosynthesis protein CbiB">
    <location>
        <begin position="1"/>
        <end position="319"/>
    </location>
</feature>
<feature type="transmembrane region" description="Helical" evidence="1">
    <location>
        <begin position="3"/>
        <end position="23"/>
    </location>
</feature>
<feature type="transmembrane region" description="Helical" evidence="1">
    <location>
        <begin position="56"/>
        <end position="76"/>
    </location>
</feature>
<feature type="transmembrane region" description="Helical" evidence="1">
    <location>
        <begin position="82"/>
        <end position="102"/>
    </location>
</feature>
<feature type="transmembrane region" description="Helical" evidence="1">
    <location>
        <begin position="153"/>
        <end position="173"/>
    </location>
</feature>
<feature type="transmembrane region" description="Helical" evidence="1">
    <location>
        <begin position="296"/>
        <end position="316"/>
    </location>
</feature>
<organism>
    <name type="scientific">Salmonella typhimurium (strain LT2 / SGSC1412 / ATCC 700720)</name>
    <dbReference type="NCBI Taxonomy" id="99287"/>
    <lineage>
        <taxon>Bacteria</taxon>
        <taxon>Pseudomonadati</taxon>
        <taxon>Pseudomonadota</taxon>
        <taxon>Gammaproteobacteria</taxon>
        <taxon>Enterobacterales</taxon>
        <taxon>Enterobacteriaceae</taxon>
        <taxon>Salmonella</taxon>
    </lineage>
</organism>
<sequence length="319" mass="35370">MTILAWCIAWVLDFIIGDPQHWPHPVRWIGRLITFVQRIVRRYCPGDKALRIGGGVMWVVVVGATWGVAWGVLALAQRIHPWFGWSVEVWMIFTTLAGRSLAHAAQEVERPLRKNDLAESRIKLSWIVGRDTSQLQPAQINRAVVETVAENTVDGIIAPLFFLFLGGAPLAMAYKAVNTLDSMVGYKHEKYRAIGMVSARMDDVANYLPARLSWLLLGIAAGLCRLSGWRALRIGWRDRYNHSSPNCAWSEACVAGALGIQLGGPNNYFGERVDKPWIGDAQRDISVDDISRTIRLMWVASTLALALLIAARCGLSGVA</sequence>
<dbReference type="EMBL" id="L12006">
    <property type="protein sequence ID" value="AAA27253.1"/>
    <property type="molecule type" value="Genomic_DNA"/>
</dbReference>
<dbReference type="EMBL" id="AE006468">
    <property type="protein sequence ID" value="AAL20938.1"/>
    <property type="molecule type" value="Genomic_DNA"/>
</dbReference>
<dbReference type="RefSeq" id="WP_000153648.1">
    <property type="nucleotide sequence ID" value="NC_003197.2"/>
</dbReference>
<dbReference type="STRING" id="99287.STM2034"/>
<dbReference type="PaxDb" id="99287-STM2034"/>
<dbReference type="KEGG" id="stm:STM2034"/>
<dbReference type="PATRIC" id="fig|99287.12.peg.2156"/>
<dbReference type="HOGENOM" id="CLU_054212_0_0_6"/>
<dbReference type="OMA" id="RWHPLVG"/>
<dbReference type="PhylomeDB" id="Q05600"/>
<dbReference type="BioCyc" id="MetaCyc:MONOMER-13228"/>
<dbReference type="BioCyc" id="SENT99287:STM2034-MONOMER"/>
<dbReference type="BRENDA" id="6.3.1.10">
    <property type="organism ID" value="2169"/>
</dbReference>
<dbReference type="UniPathway" id="UPA00148">
    <property type="reaction ID" value="UER00235"/>
</dbReference>
<dbReference type="Proteomes" id="UP000001014">
    <property type="component" value="Chromosome"/>
</dbReference>
<dbReference type="GO" id="GO:0005886">
    <property type="term" value="C:plasma membrane"/>
    <property type="evidence" value="ECO:0007669"/>
    <property type="project" value="UniProtKB-SubCell"/>
</dbReference>
<dbReference type="GO" id="GO:0015420">
    <property type="term" value="F:ABC-type vitamin B12 transporter activity"/>
    <property type="evidence" value="ECO:0007669"/>
    <property type="project" value="UniProtKB-UniRule"/>
</dbReference>
<dbReference type="GO" id="GO:0048472">
    <property type="term" value="F:threonine-phosphate decarboxylase activity"/>
    <property type="evidence" value="ECO:0007669"/>
    <property type="project" value="InterPro"/>
</dbReference>
<dbReference type="GO" id="GO:0009236">
    <property type="term" value="P:cobalamin biosynthetic process"/>
    <property type="evidence" value="ECO:0007669"/>
    <property type="project" value="UniProtKB-UniRule"/>
</dbReference>
<dbReference type="HAMAP" id="MF_00024">
    <property type="entry name" value="CobD_CbiB"/>
    <property type="match status" value="1"/>
</dbReference>
<dbReference type="InterPro" id="IPR004485">
    <property type="entry name" value="Cobalamin_biosynth_CobD/CbiB"/>
</dbReference>
<dbReference type="NCBIfam" id="TIGR00380">
    <property type="entry name" value="cobal_cbiB"/>
    <property type="match status" value="1"/>
</dbReference>
<dbReference type="PANTHER" id="PTHR34308">
    <property type="entry name" value="COBALAMIN BIOSYNTHESIS PROTEIN CBIB"/>
    <property type="match status" value="1"/>
</dbReference>
<dbReference type="PANTHER" id="PTHR34308:SF1">
    <property type="entry name" value="COBALAMIN BIOSYNTHESIS PROTEIN CBIB"/>
    <property type="match status" value="1"/>
</dbReference>
<dbReference type="Pfam" id="PF03186">
    <property type="entry name" value="CobD_Cbib"/>
    <property type="match status" value="1"/>
</dbReference>
<name>CBIB_SALTY</name>
<accession>Q05600</accession>
<comment type="function">
    <text>Converts cobyric acid to cobinamide by the addition of aminopropanol on the F carboxylic group. However, the true cosubstrate could be (R)-1-amino-2-propanol O-2-phosphate, leading to cobinamide phosphate.</text>
</comment>
<comment type="pathway">
    <text>Cofactor biosynthesis; adenosylcobalamin biosynthesis; adenosylcobalamin from cob(II)yrinate a,c-diamide: step 4/7.</text>
</comment>
<comment type="subcellular location">
    <subcellularLocation>
        <location evidence="2">Cell membrane</location>
        <topology evidence="2">Multi-pass membrane protein</topology>
    </subcellularLocation>
</comment>
<comment type="similarity">
    <text evidence="2">Belongs to the CobD/CbiB family.</text>
</comment>
<gene>
    <name type="primary">cbiB</name>
    <name type="ordered locus">STM2034</name>
</gene>
<proteinExistence type="inferred from homology"/>
<keyword id="KW-1003">Cell membrane</keyword>
<keyword id="KW-0169">Cobalamin biosynthesis</keyword>
<keyword id="KW-0472">Membrane</keyword>
<keyword id="KW-1185">Reference proteome</keyword>
<keyword id="KW-0812">Transmembrane</keyword>
<keyword id="KW-1133">Transmembrane helix</keyword>
<reference key="1">
    <citation type="journal article" date="1993" name="J. Bacteriol.">
        <title>Characterization of the cobalamin (vitamin B12) biosynthetic genes of Salmonella typhimurium.</title>
        <authorList>
            <person name="Roth J.R."/>
            <person name="Lawrence J.G."/>
            <person name="Rubenfield M."/>
            <person name="Kieffer-Higgins S."/>
            <person name="Church G.M."/>
        </authorList>
    </citation>
    <scope>NUCLEOTIDE SEQUENCE [GENOMIC DNA]</scope>
    <source>
        <strain>LT2</strain>
    </source>
</reference>
<reference key="2">
    <citation type="journal article" date="2001" name="Nature">
        <title>Complete genome sequence of Salmonella enterica serovar Typhimurium LT2.</title>
        <authorList>
            <person name="McClelland M."/>
            <person name="Sanderson K.E."/>
            <person name="Spieth J."/>
            <person name="Clifton S.W."/>
            <person name="Latreille P."/>
            <person name="Courtney L."/>
            <person name="Porwollik S."/>
            <person name="Ali J."/>
            <person name="Dante M."/>
            <person name="Du F."/>
            <person name="Hou S."/>
            <person name="Layman D."/>
            <person name="Leonard S."/>
            <person name="Nguyen C."/>
            <person name="Scott K."/>
            <person name="Holmes A."/>
            <person name="Grewal N."/>
            <person name="Mulvaney E."/>
            <person name="Ryan E."/>
            <person name="Sun H."/>
            <person name="Florea L."/>
            <person name="Miller W."/>
            <person name="Stoneking T."/>
            <person name="Nhan M."/>
            <person name="Waterston R."/>
            <person name="Wilson R.K."/>
        </authorList>
    </citation>
    <scope>NUCLEOTIDE SEQUENCE [LARGE SCALE GENOMIC DNA]</scope>
    <source>
        <strain>LT2 / SGSC1412 / ATCC 700720</strain>
    </source>
</reference>
<reference key="3">
    <citation type="journal article" date="1998" name="J. Biol. Chem.">
        <title>CobD, a novel enzyme with L-threonine-O-3-phosphate decarboxylase activity, is responsible for the synthesis of (R)-1-amino-2-propanol O-2-phosphate, a proposed new intermediate in cobalamin biosynthesis in Salmonella typhimurium LT2.</title>
        <authorList>
            <person name="Brushaber K.R."/>
            <person name="O'Toole G.A."/>
            <person name="Escalante-Semerena J.C."/>
        </authorList>
    </citation>
    <scope>POSSIBLE COSUBSTRATE</scope>
    <source>
        <strain>LT2</strain>
    </source>
</reference>
<protein>
    <recommendedName>
        <fullName>Cobalamin biosynthesis protein CbiB</fullName>
    </recommendedName>
</protein>